<comment type="function">
    <text evidence="1">Plays an essential role in the initiation and regulation of chromosomal replication. ATP-DnaA binds to the origin of replication (oriC) to initiate formation of the DNA replication initiation complex once per cell cycle. Binds the DnaA box (a 9 base pair repeat at the origin) and separates the double-stranded (ds)DNA. Forms a right-handed helical filament on oriC DNA; dsDNA binds to the exterior of the filament while single-stranded (ss)DNA is stabiized in the filament's interior. The ATP-DnaA-oriC complex binds and stabilizes one strand of the AT-rich DNA unwinding element (DUE), permitting loading of DNA polymerase. After initiation quickly degrades to an ADP-DnaA complex that is not apt for DNA replication. Binds acidic phospholipids.</text>
</comment>
<comment type="subunit">
    <text evidence="1">Oligomerizes as a right-handed, spiral filament on DNA at oriC.</text>
</comment>
<comment type="subcellular location">
    <subcellularLocation>
        <location evidence="1">Cytoplasm</location>
    </subcellularLocation>
</comment>
<comment type="domain">
    <text evidence="1">Domain I is involved in oligomerization and binding regulators, domain II is flexibile and of varying length in different bacteria, domain III forms the AAA+ region, while domain IV binds dsDNA.</text>
</comment>
<comment type="similarity">
    <text evidence="1">Belongs to the DnaA family.</text>
</comment>
<accession>A8FJG5</accession>
<proteinExistence type="inferred from homology"/>
<protein>
    <recommendedName>
        <fullName evidence="1">Chromosomal replication initiator protein DnaA</fullName>
    </recommendedName>
</protein>
<evidence type="ECO:0000255" key="1">
    <source>
        <dbReference type="HAMAP-Rule" id="MF_00377"/>
    </source>
</evidence>
<name>DNAA_CAMJ8</name>
<gene>
    <name evidence="1" type="primary">dnaA</name>
    <name type="ordered locus">C8J_0001</name>
</gene>
<feature type="chain" id="PRO_1000072155" description="Chromosomal replication initiator protein DnaA">
    <location>
        <begin position="1"/>
        <end position="440"/>
    </location>
</feature>
<feature type="region of interest" description="Domain I, interacts with DnaA modulators" evidence="1">
    <location>
        <begin position="1"/>
        <end position="75"/>
    </location>
</feature>
<feature type="region of interest" description="Domain II" evidence="1">
    <location>
        <begin position="75"/>
        <end position="99"/>
    </location>
</feature>
<feature type="region of interest" description="Domain III, AAA+ region" evidence="1">
    <location>
        <begin position="100"/>
        <end position="316"/>
    </location>
</feature>
<feature type="region of interest" description="Domain IV, binds dsDNA" evidence="1">
    <location>
        <begin position="317"/>
        <end position="440"/>
    </location>
</feature>
<feature type="binding site" evidence="1">
    <location>
        <position position="146"/>
    </location>
    <ligand>
        <name>ATP</name>
        <dbReference type="ChEBI" id="CHEBI:30616"/>
    </ligand>
</feature>
<feature type="binding site" evidence="1">
    <location>
        <position position="148"/>
    </location>
    <ligand>
        <name>ATP</name>
        <dbReference type="ChEBI" id="CHEBI:30616"/>
    </ligand>
</feature>
<feature type="binding site" evidence="1">
    <location>
        <position position="149"/>
    </location>
    <ligand>
        <name>ATP</name>
        <dbReference type="ChEBI" id="CHEBI:30616"/>
    </ligand>
</feature>
<feature type="binding site" evidence="1">
    <location>
        <position position="150"/>
    </location>
    <ligand>
        <name>ATP</name>
        <dbReference type="ChEBI" id="CHEBI:30616"/>
    </ligand>
</feature>
<dbReference type="EMBL" id="CP000814">
    <property type="protein sequence ID" value="ABV51602.1"/>
    <property type="molecule type" value="Genomic_DNA"/>
</dbReference>
<dbReference type="RefSeq" id="WP_012006611.1">
    <property type="nucleotide sequence ID" value="NC_009839.1"/>
</dbReference>
<dbReference type="SMR" id="A8FJG5"/>
<dbReference type="KEGG" id="cju:C8J_0001"/>
<dbReference type="HOGENOM" id="CLU_026910_3_1_7"/>
<dbReference type="GO" id="GO:0005737">
    <property type="term" value="C:cytoplasm"/>
    <property type="evidence" value="ECO:0007669"/>
    <property type="project" value="UniProtKB-SubCell"/>
</dbReference>
<dbReference type="GO" id="GO:0005886">
    <property type="term" value="C:plasma membrane"/>
    <property type="evidence" value="ECO:0007669"/>
    <property type="project" value="TreeGrafter"/>
</dbReference>
<dbReference type="GO" id="GO:0005524">
    <property type="term" value="F:ATP binding"/>
    <property type="evidence" value="ECO:0007669"/>
    <property type="project" value="UniProtKB-UniRule"/>
</dbReference>
<dbReference type="GO" id="GO:0016887">
    <property type="term" value="F:ATP hydrolysis activity"/>
    <property type="evidence" value="ECO:0007669"/>
    <property type="project" value="InterPro"/>
</dbReference>
<dbReference type="GO" id="GO:0003688">
    <property type="term" value="F:DNA replication origin binding"/>
    <property type="evidence" value="ECO:0007669"/>
    <property type="project" value="UniProtKB-UniRule"/>
</dbReference>
<dbReference type="GO" id="GO:0008289">
    <property type="term" value="F:lipid binding"/>
    <property type="evidence" value="ECO:0007669"/>
    <property type="project" value="UniProtKB-KW"/>
</dbReference>
<dbReference type="GO" id="GO:0006270">
    <property type="term" value="P:DNA replication initiation"/>
    <property type="evidence" value="ECO:0007669"/>
    <property type="project" value="UniProtKB-UniRule"/>
</dbReference>
<dbReference type="GO" id="GO:0006275">
    <property type="term" value="P:regulation of DNA replication"/>
    <property type="evidence" value="ECO:0007669"/>
    <property type="project" value="UniProtKB-UniRule"/>
</dbReference>
<dbReference type="CDD" id="cd00009">
    <property type="entry name" value="AAA"/>
    <property type="match status" value="1"/>
</dbReference>
<dbReference type="CDD" id="cd06571">
    <property type="entry name" value="Bac_DnaA_C"/>
    <property type="match status" value="1"/>
</dbReference>
<dbReference type="Gene3D" id="1.10.1750.10">
    <property type="match status" value="1"/>
</dbReference>
<dbReference type="Gene3D" id="1.10.8.60">
    <property type="match status" value="1"/>
</dbReference>
<dbReference type="Gene3D" id="3.30.300.180">
    <property type="match status" value="1"/>
</dbReference>
<dbReference type="Gene3D" id="3.40.50.300">
    <property type="entry name" value="P-loop containing nucleotide triphosphate hydrolases"/>
    <property type="match status" value="1"/>
</dbReference>
<dbReference type="HAMAP" id="MF_00377">
    <property type="entry name" value="DnaA_bact"/>
    <property type="match status" value="1"/>
</dbReference>
<dbReference type="InterPro" id="IPR003593">
    <property type="entry name" value="AAA+_ATPase"/>
</dbReference>
<dbReference type="InterPro" id="IPR001957">
    <property type="entry name" value="Chromosome_initiator_DnaA"/>
</dbReference>
<dbReference type="InterPro" id="IPR020591">
    <property type="entry name" value="Chromosome_initiator_DnaA-like"/>
</dbReference>
<dbReference type="InterPro" id="IPR018312">
    <property type="entry name" value="Chromosome_initiator_DnaA_CS"/>
</dbReference>
<dbReference type="InterPro" id="IPR013159">
    <property type="entry name" value="DnaA_C"/>
</dbReference>
<dbReference type="InterPro" id="IPR013317">
    <property type="entry name" value="DnaA_dom"/>
</dbReference>
<dbReference type="InterPro" id="IPR024633">
    <property type="entry name" value="DnaA_N_dom"/>
</dbReference>
<dbReference type="InterPro" id="IPR038454">
    <property type="entry name" value="DnaA_N_sf"/>
</dbReference>
<dbReference type="InterPro" id="IPR027417">
    <property type="entry name" value="P-loop_NTPase"/>
</dbReference>
<dbReference type="InterPro" id="IPR010921">
    <property type="entry name" value="Trp_repressor/repl_initiator"/>
</dbReference>
<dbReference type="NCBIfam" id="TIGR00362">
    <property type="entry name" value="DnaA"/>
    <property type="match status" value="1"/>
</dbReference>
<dbReference type="PANTHER" id="PTHR30050">
    <property type="entry name" value="CHROMOSOMAL REPLICATION INITIATOR PROTEIN DNAA"/>
    <property type="match status" value="1"/>
</dbReference>
<dbReference type="PANTHER" id="PTHR30050:SF2">
    <property type="entry name" value="CHROMOSOMAL REPLICATION INITIATOR PROTEIN DNAA"/>
    <property type="match status" value="1"/>
</dbReference>
<dbReference type="Pfam" id="PF00308">
    <property type="entry name" value="Bac_DnaA"/>
    <property type="match status" value="1"/>
</dbReference>
<dbReference type="Pfam" id="PF08299">
    <property type="entry name" value="Bac_DnaA_C"/>
    <property type="match status" value="1"/>
</dbReference>
<dbReference type="Pfam" id="PF11638">
    <property type="entry name" value="DnaA_N"/>
    <property type="match status" value="1"/>
</dbReference>
<dbReference type="PRINTS" id="PR00051">
    <property type="entry name" value="DNAA"/>
</dbReference>
<dbReference type="SMART" id="SM00382">
    <property type="entry name" value="AAA"/>
    <property type="match status" value="1"/>
</dbReference>
<dbReference type="SMART" id="SM00760">
    <property type="entry name" value="Bac_DnaA_C"/>
    <property type="match status" value="1"/>
</dbReference>
<dbReference type="SUPFAM" id="SSF52540">
    <property type="entry name" value="P-loop containing nucleoside triphosphate hydrolases"/>
    <property type="match status" value="1"/>
</dbReference>
<dbReference type="SUPFAM" id="SSF48295">
    <property type="entry name" value="TrpR-like"/>
    <property type="match status" value="1"/>
</dbReference>
<dbReference type="PROSITE" id="PS01008">
    <property type="entry name" value="DNAA"/>
    <property type="match status" value="1"/>
</dbReference>
<organism>
    <name type="scientific">Campylobacter jejuni subsp. jejuni serotype O:6 (strain 81116 / NCTC 11828)</name>
    <dbReference type="NCBI Taxonomy" id="407148"/>
    <lineage>
        <taxon>Bacteria</taxon>
        <taxon>Pseudomonadati</taxon>
        <taxon>Campylobacterota</taxon>
        <taxon>Epsilonproteobacteria</taxon>
        <taxon>Campylobacterales</taxon>
        <taxon>Campylobacteraceae</taxon>
        <taxon>Campylobacter</taxon>
    </lineage>
</organism>
<sequence>MNPNQILENLKKELSENEYENYIAILKFNEKQSKADFLVFNAPNELLAKFIQTKYGKKISHFYEVQSGNKASVLIQAQSAKQSSKSTKIDIAHIKAQSTILNPSFTFESFVVGDSNKYAYGACKAISQKDKLGKLYNPIFIYGPTGLGKTHLLQAVGNASLEMGKKVIYATSENFINDFTSNLKNGSLDKFHEKYRNCDVLLIDDVQFLGKTDKIQEEFFFIFNEIKNNDGQIIMTSDNPPNMLKGITERLKSRFAHGIIADITPPQLDTKIAIIRKKCEFNDINLSNDIINYIATSLGDNIREIEGIIISLNAYATILGQEITLELAKSVMKDHIKEKKENITIDDILSLVCKEFNIKPSDVKSNKKTQNIVTARRIVIYLARALTALTMPQLANYFEMKDHTAISHNVKKITEMIENDGSLKAKIEELKNKILVKSQS</sequence>
<reference key="1">
    <citation type="journal article" date="2007" name="J. Bacteriol.">
        <title>The complete genome sequence of Campylobacter jejuni strain 81116 (NCTC11828).</title>
        <authorList>
            <person name="Pearson B.M."/>
            <person name="Gaskin D.J.H."/>
            <person name="Segers R.P.A.M."/>
            <person name="Wells J.M."/>
            <person name="Nuijten P.J.M."/>
            <person name="van Vliet A.H.M."/>
        </authorList>
    </citation>
    <scope>NUCLEOTIDE SEQUENCE [LARGE SCALE GENOMIC DNA]</scope>
    <source>
        <strain>81116 / NCTC 11828</strain>
    </source>
</reference>
<keyword id="KW-0067">ATP-binding</keyword>
<keyword id="KW-0963">Cytoplasm</keyword>
<keyword id="KW-0235">DNA replication</keyword>
<keyword id="KW-0238">DNA-binding</keyword>
<keyword id="KW-0446">Lipid-binding</keyword>
<keyword id="KW-0547">Nucleotide-binding</keyword>